<name>GLMM_BORPD</name>
<feature type="chain" id="PRO_1000201065" description="Phosphoglucosamine mutase">
    <location>
        <begin position="1"/>
        <end position="447"/>
    </location>
</feature>
<feature type="active site" description="Phosphoserine intermediate" evidence="1">
    <location>
        <position position="108"/>
    </location>
</feature>
<feature type="binding site" description="via phosphate group" evidence="1">
    <location>
        <position position="108"/>
    </location>
    <ligand>
        <name>Mg(2+)</name>
        <dbReference type="ChEBI" id="CHEBI:18420"/>
    </ligand>
</feature>
<feature type="binding site" evidence="1">
    <location>
        <position position="247"/>
    </location>
    <ligand>
        <name>Mg(2+)</name>
        <dbReference type="ChEBI" id="CHEBI:18420"/>
    </ligand>
</feature>
<feature type="binding site" evidence="1">
    <location>
        <position position="249"/>
    </location>
    <ligand>
        <name>Mg(2+)</name>
        <dbReference type="ChEBI" id="CHEBI:18420"/>
    </ligand>
</feature>
<feature type="binding site" evidence="1">
    <location>
        <position position="251"/>
    </location>
    <ligand>
        <name>Mg(2+)</name>
        <dbReference type="ChEBI" id="CHEBI:18420"/>
    </ligand>
</feature>
<feature type="modified residue" description="Phosphoserine" evidence="1">
    <location>
        <position position="108"/>
    </location>
</feature>
<dbReference type="EC" id="5.4.2.10" evidence="1"/>
<dbReference type="EMBL" id="AM902716">
    <property type="protein sequence ID" value="CAP43872.1"/>
    <property type="molecule type" value="Genomic_DNA"/>
</dbReference>
<dbReference type="SMR" id="A9HYU0"/>
<dbReference type="STRING" id="94624.Bpet3529"/>
<dbReference type="KEGG" id="bpt:Bpet3529"/>
<dbReference type="eggNOG" id="COG1109">
    <property type="taxonomic scope" value="Bacteria"/>
</dbReference>
<dbReference type="Proteomes" id="UP000001225">
    <property type="component" value="Chromosome"/>
</dbReference>
<dbReference type="GO" id="GO:0005829">
    <property type="term" value="C:cytosol"/>
    <property type="evidence" value="ECO:0007669"/>
    <property type="project" value="TreeGrafter"/>
</dbReference>
<dbReference type="GO" id="GO:0000287">
    <property type="term" value="F:magnesium ion binding"/>
    <property type="evidence" value="ECO:0007669"/>
    <property type="project" value="UniProtKB-UniRule"/>
</dbReference>
<dbReference type="GO" id="GO:0008966">
    <property type="term" value="F:phosphoglucosamine mutase activity"/>
    <property type="evidence" value="ECO:0007669"/>
    <property type="project" value="UniProtKB-UniRule"/>
</dbReference>
<dbReference type="GO" id="GO:0004615">
    <property type="term" value="F:phosphomannomutase activity"/>
    <property type="evidence" value="ECO:0007669"/>
    <property type="project" value="TreeGrafter"/>
</dbReference>
<dbReference type="GO" id="GO:0005975">
    <property type="term" value="P:carbohydrate metabolic process"/>
    <property type="evidence" value="ECO:0007669"/>
    <property type="project" value="InterPro"/>
</dbReference>
<dbReference type="GO" id="GO:0009252">
    <property type="term" value="P:peptidoglycan biosynthetic process"/>
    <property type="evidence" value="ECO:0007669"/>
    <property type="project" value="TreeGrafter"/>
</dbReference>
<dbReference type="GO" id="GO:0006048">
    <property type="term" value="P:UDP-N-acetylglucosamine biosynthetic process"/>
    <property type="evidence" value="ECO:0007669"/>
    <property type="project" value="TreeGrafter"/>
</dbReference>
<dbReference type="CDD" id="cd05802">
    <property type="entry name" value="GlmM"/>
    <property type="match status" value="1"/>
</dbReference>
<dbReference type="FunFam" id="3.40.120.10:FF:000001">
    <property type="entry name" value="Phosphoglucosamine mutase"/>
    <property type="match status" value="1"/>
</dbReference>
<dbReference type="FunFam" id="3.40.120.10:FF:000003">
    <property type="entry name" value="Phosphoglucosamine mutase"/>
    <property type="match status" value="1"/>
</dbReference>
<dbReference type="Gene3D" id="3.40.120.10">
    <property type="entry name" value="Alpha-D-Glucose-1,6-Bisphosphate, subunit A, domain 3"/>
    <property type="match status" value="3"/>
</dbReference>
<dbReference type="Gene3D" id="3.30.310.50">
    <property type="entry name" value="Alpha-D-phosphohexomutase, C-terminal domain"/>
    <property type="match status" value="1"/>
</dbReference>
<dbReference type="HAMAP" id="MF_01554_B">
    <property type="entry name" value="GlmM_B"/>
    <property type="match status" value="1"/>
</dbReference>
<dbReference type="InterPro" id="IPR005844">
    <property type="entry name" value="A-D-PHexomutase_a/b/a-I"/>
</dbReference>
<dbReference type="InterPro" id="IPR016055">
    <property type="entry name" value="A-D-PHexomutase_a/b/a-I/II/III"/>
</dbReference>
<dbReference type="InterPro" id="IPR005845">
    <property type="entry name" value="A-D-PHexomutase_a/b/a-II"/>
</dbReference>
<dbReference type="InterPro" id="IPR005846">
    <property type="entry name" value="A-D-PHexomutase_a/b/a-III"/>
</dbReference>
<dbReference type="InterPro" id="IPR005843">
    <property type="entry name" value="A-D-PHexomutase_C"/>
</dbReference>
<dbReference type="InterPro" id="IPR036900">
    <property type="entry name" value="A-D-PHexomutase_C_sf"/>
</dbReference>
<dbReference type="InterPro" id="IPR016066">
    <property type="entry name" value="A-D-PHexomutase_CS"/>
</dbReference>
<dbReference type="InterPro" id="IPR005841">
    <property type="entry name" value="Alpha-D-phosphohexomutase_SF"/>
</dbReference>
<dbReference type="InterPro" id="IPR006352">
    <property type="entry name" value="GlmM_bact"/>
</dbReference>
<dbReference type="InterPro" id="IPR050060">
    <property type="entry name" value="Phosphoglucosamine_mutase"/>
</dbReference>
<dbReference type="NCBIfam" id="TIGR01455">
    <property type="entry name" value="glmM"/>
    <property type="match status" value="1"/>
</dbReference>
<dbReference type="NCBIfam" id="NF008139">
    <property type="entry name" value="PRK10887.1"/>
    <property type="match status" value="1"/>
</dbReference>
<dbReference type="PANTHER" id="PTHR42946:SF1">
    <property type="entry name" value="PHOSPHOGLUCOMUTASE (ALPHA-D-GLUCOSE-1,6-BISPHOSPHATE-DEPENDENT)"/>
    <property type="match status" value="1"/>
</dbReference>
<dbReference type="PANTHER" id="PTHR42946">
    <property type="entry name" value="PHOSPHOHEXOSE MUTASE"/>
    <property type="match status" value="1"/>
</dbReference>
<dbReference type="Pfam" id="PF02878">
    <property type="entry name" value="PGM_PMM_I"/>
    <property type="match status" value="1"/>
</dbReference>
<dbReference type="Pfam" id="PF02879">
    <property type="entry name" value="PGM_PMM_II"/>
    <property type="match status" value="1"/>
</dbReference>
<dbReference type="Pfam" id="PF02880">
    <property type="entry name" value="PGM_PMM_III"/>
    <property type="match status" value="1"/>
</dbReference>
<dbReference type="Pfam" id="PF00408">
    <property type="entry name" value="PGM_PMM_IV"/>
    <property type="match status" value="1"/>
</dbReference>
<dbReference type="PRINTS" id="PR00509">
    <property type="entry name" value="PGMPMM"/>
</dbReference>
<dbReference type="SUPFAM" id="SSF55957">
    <property type="entry name" value="Phosphoglucomutase, C-terminal domain"/>
    <property type="match status" value="1"/>
</dbReference>
<dbReference type="SUPFAM" id="SSF53738">
    <property type="entry name" value="Phosphoglucomutase, first 3 domains"/>
    <property type="match status" value="3"/>
</dbReference>
<dbReference type="PROSITE" id="PS00710">
    <property type="entry name" value="PGM_PMM"/>
    <property type="match status" value="1"/>
</dbReference>
<organism>
    <name type="scientific">Bordetella petrii (strain ATCC BAA-461 / DSM 12804 / CCUG 43448)</name>
    <dbReference type="NCBI Taxonomy" id="340100"/>
    <lineage>
        <taxon>Bacteria</taxon>
        <taxon>Pseudomonadati</taxon>
        <taxon>Pseudomonadota</taxon>
        <taxon>Betaproteobacteria</taxon>
        <taxon>Burkholderiales</taxon>
        <taxon>Alcaligenaceae</taxon>
        <taxon>Bordetella</taxon>
    </lineage>
</organism>
<gene>
    <name evidence="1" type="primary">glmM</name>
    <name type="ordered locus">Bpet3529</name>
</gene>
<sequence length="447" mass="47521">MTQRKYFGTDGVRGEVGGEVINAAFALRLGYAAGRVLARQHGGRGGSRPQVVIGKDTRISGYMLESALEAGLSAAGIDVLLAGPVPTPAVAYLTRALRLVAGIVISASHNPYQDNGIKFFSAQGMKLPDEVEAEIEAALHEPLGCVGSEALGRARRMQDSQGRYIEFCKSTFPNDLDLNGVKIVVDAAHGAAYNVAPHVFRELGADVHAIGVSPDGFNINEGVGALHPESLARAVRERGAHLGIALDGDADRLQMVDGDGRIYNGDELLYAIVRERMSRGTVAGVVGTLMTNYGFELEMQRLGVGFERAKVGDRYVMEQMQARGWLYGGESSGHLICLDCHTTGDGIIAALQVLTALRRGNVPLADWLGDLRMYPQKMINVPLAPGTDWKSHAGLAAATRAVEAELAGRGRVLIRASGTEPKLRLMVEAEEPALAASCAEKLAASLA</sequence>
<protein>
    <recommendedName>
        <fullName evidence="1">Phosphoglucosamine mutase</fullName>
        <ecNumber evidence="1">5.4.2.10</ecNumber>
    </recommendedName>
</protein>
<proteinExistence type="inferred from homology"/>
<reference key="1">
    <citation type="journal article" date="2008" name="BMC Genomics">
        <title>The missing link: Bordetella petrii is endowed with both the metabolic versatility of environmental bacteria and virulence traits of pathogenic Bordetellae.</title>
        <authorList>
            <person name="Gross R."/>
            <person name="Guzman C.A."/>
            <person name="Sebaihia M."/>
            <person name="Martin dos Santos V.A.P."/>
            <person name="Pieper D.H."/>
            <person name="Koebnik R."/>
            <person name="Lechner M."/>
            <person name="Bartels D."/>
            <person name="Buhrmester J."/>
            <person name="Choudhuri J.V."/>
            <person name="Ebensen T."/>
            <person name="Gaigalat L."/>
            <person name="Herrmann S."/>
            <person name="Khachane A.N."/>
            <person name="Larisch C."/>
            <person name="Link S."/>
            <person name="Linke B."/>
            <person name="Meyer F."/>
            <person name="Mormann S."/>
            <person name="Nakunst D."/>
            <person name="Rueckert C."/>
            <person name="Schneiker-Bekel S."/>
            <person name="Schulze K."/>
            <person name="Voerholter F.-J."/>
            <person name="Yevsa T."/>
            <person name="Engle J.T."/>
            <person name="Goldman W.E."/>
            <person name="Puehler A."/>
            <person name="Goebel U.B."/>
            <person name="Goesmann A."/>
            <person name="Bloecker H."/>
            <person name="Kaiser O."/>
            <person name="Martinez-Arias R."/>
        </authorList>
    </citation>
    <scope>NUCLEOTIDE SEQUENCE [LARGE SCALE GENOMIC DNA]</scope>
    <source>
        <strain>ATCC BAA-461 / DSM 12804 / CCUG 43448</strain>
    </source>
</reference>
<keyword id="KW-0413">Isomerase</keyword>
<keyword id="KW-0460">Magnesium</keyword>
<keyword id="KW-0479">Metal-binding</keyword>
<keyword id="KW-0597">Phosphoprotein</keyword>
<evidence type="ECO:0000255" key="1">
    <source>
        <dbReference type="HAMAP-Rule" id="MF_01554"/>
    </source>
</evidence>
<comment type="function">
    <text evidence="1">Catalyzes the conversion of glucosamine-6-phosphate to glucosamine-1-phosphate.</text>
</comment>
<comment type="catalytic activity">
    <reaction evidence="1">
        <text>alpha-D-glucosamine 1-phosphate = D-glucosamine 6-phosphate</text>
        <dbReference type="Rhea" id="RHEA:23424"/>
        <dbReference type="ChEBI" id="CHEBI:58516"/>
        <dbReference type="ChEBI" id="CHEBI:58725"/>
        <dbReference type="EC" id="5.4.2.10"/>
    </reaction>
</comment>
<comment type="cofactor">
    <cofactor evidence="1">
        <name>Mg(2+)</name>
        <dbReference type="ChEBI" id="CHEBI:18420"/>
    </cofactor>
    <text evidence="1">Binds 1 Mg(2+) ion per subunit.</text>
</comment>
<comment type="PTM">
    <text evidence="1">Activated by phosphorylation.</text>
</comment>
<comment type="similarity">
    <text evidence="1">Belongs to the phosphohexose mutase family.</text>
</comment>
<accession>A9HYU0</accession>